<evidence type="ECO:0000255" key="1">
    <source>
        <dbReference type="HAMAP-Rule" id="MF_00948"/>
    </source>
</evidence>
<reference key="1">
    <citation type="journal article" date="2005" name="PLoS Biol.">
        <title>The genome sequence of Rickettsia felis identifies the first putative conjugative plasmid in an obligate intracellular parasite.</title>
        <authorList>
            <person name="Ogata H."/>
            <person name="Renesto P."/>
            <person name="Audic S."/>
            <person name="Robert C."/>
            <person name="Blanc G."/>
            <person name="Fournier P.-E."/>
            <person name="Parinello H."/>
            <person name="Claverie J.-M."/>
            <person name="Raoult D."/>
        </authorList>
    </citation>
    <scope>NUCLEOTIDE SEQUENCE [LARGE SCALE GENOMIC DNA]</scope>
    <source>
        <strain>ATCC VR-1525 / URRWXCal2</strain>
    </source>
</reference>
<sequence>MTEQSIDNILPSSEKNVKQWYVVHTASGAEKRIKEDMLRRIAKQKMTDFFEDILIPVFGVSEVKRGKNVKVEKKLMPSYILIKMNMTDKSWHLVKNIPGVTGFLGSKTTPKALTESEIQNIFNNLEAEAKETKNSKLYEVGEIVIVTDGPFETFTGTVEEIDQEKNRLKVSVSIFGKATPIELNFNQVKKND</sequence>
<organism>
    <name type="scientific">Rickettsia felis (strain ATCC VR-1525 / URRWXCal2)</name>
    <name type="common">Rickettsia azadi</name>
    <dbReference type="NCBI Taxonomy" id="315456"/>
    <lineage>
        <taxon>Bacteria</taxon>
        <taxon>Pseudomonadati</taxon>
        <taxon>Pseudomonadota</taxon>
        <taxon>Alphaproteobacteria</taxon>
        <taxon>Rickettsiales</taxon>
        <taxon>Rickettsiaceae</taxon>
        <taxon>Rickettsieae</taxon>
        <taxon>Rickettsia</taxon>
        <taxon>spotted fever group</taxon>
    </lineage>
</organism>
<gene>
    <name evidence="1" type="primary">nusG</name>
    <name type="ordered locus">RF_1151</name>
</gene>
<protein>
    <recommendedName>
        <fullName evidence="1">Transcription termination/antitermination protein NusG</fullName>
    </recommendedName>
</protein>
<dbReference type="EMBL" id="CP000053">
    <property type="protein sequence ID" value="AAY62002.1"/>
    <property type="molecule type" value="Genomic_DNA"/>
</dbReference>
<dbReference type="SMR" id="Q4UKC9"/>
<dbReference type="STRING" id="315456.RF_1151"/>
<dbReference type="KEGG" id="rfe:RF_1151"/>
<dbReference type="eggNOG" id="COG0250">
    <property type="taxonomic scope" value="Bacteria"/>
</dbReference>
<dbReference type="HOGENOM" id="CLU_067287_1_0_5"/>
<dbReference type="OrthoDB" id="9809075at2"/>
<dbReference type="Proteomes" id="UP000008548">
    <property type="component" value="Chromosome"/>
</dbReference>
<dbReference type="GO" id="GO:0005829">
    <property type="term" value="C:cytosol"/>
    <property type="evidence" value="ECO:0007669"/>
    <property type="project" value="TreeGrafter"/>
</dbReference>
<dbReference type="GO" id="GO:0006353">
    <property type="term" value="P:DNA-templated transcription termination"/>
    <property type="evidence" value="ECO:0007669"/>
    <property type="project" value="UniProtKB-UniRule"/>
</dbReference>
<dbReference type="GO" id="GO:0032784">
    <property type="term" value="P:regulation of DNA-templated transcription elongation"/>
    <property type="evidence" value="ECO:0007669"/>
    <property type="project" value="InterPro"/>
</dbReference>
<dbReference type="GO" id="GO:0031564">
    <property type="term" value="P:transcription antitermination"/>
    <property type="evidence" value="ECO:0007669"/>
    <property type="project" value="UniProtKB-UniRule"/>
</dbReference>
<dbReference type="GO" id="GO:0140673">
    <property type="term" value="P:transcription elongation-coupled chromatin remodeling"/>
    <property type="evidence" value="ECO:0007669"/>
    <property type="project" value="InterPro"/>
</dbReference>
<dbReference type="CDD" id="cd06091">
    <property type="entry name" value="KOW_NusG"/>
    <property type="match status" value="1"/>
</dbReference>
<dbReference type="CDD" id="cd09891">
    <property type="entry name" value="NGN_Bact_1"/>
    <property type="match status" value="1"/>
</dbReference>
<dbReference type="FunFam" id="2.30.30.30:FF:000002">
    <property type="entry name" value="Transcription termination/antitermination factor NusG"/>
    <property type="match status" value="1"/>
</dbReference>
<dbReference type="Gene3D" id="2.30.30.30">
    <property type="match status" value="1"/>
</dbReference>
<dbReference type="Gene3D" id="3.30.70.940">
    <property type="entry name" value="NusG, N-terminal domain"/>
    <property type="match status" value="1"/>
</dbReference>
<dbReference type="HAMAP" id="MF_00948">
    <property type="entry name" value="NusG"/>
    <property type="match status" value="1"/>
</dbReference>
<dbReference type="InterPro" id="IPR005824">
    <property type="entry name" value="KOW"/>
</dbReference>
<dbReference type="InterPro" id="IPR047050">
    <property type="entry name" value="NGN"/>
</dbReference>
<dbReference type="InterPro" id="IPR006645">
    <property type="entry name" value="NGN-like_dom"/>
</dbReference>
<dbReference type="InterPro" id="IPR036735">
    <property type="entry name" value="NGN_dom_sf"/>
</dbReference>
<dbReference type="InterPro" id="IPR043425">
    <property type="entry name" value="NusG-like"/>
</dbReference>
<dbReference type="InterPro" id="IPR014722">
    <property type="entry name" value="Rib_uL2_dom2"/>
</dbReference>
<dbReference type="InterPro" id="IPR001062">
    <property type="entry name" value="Transcrpt_antiterm_NusG"/>
</dbReference>
<dbReference type="InterPro" id="IPR015869">
    <property type="entry name" value="Transcrpt_antiterm_NusG_bac_CS"/>
</dbReference>
<dbReference type="InterPro" id="IPR008991">
    <property type="entry name" value="Translation_prot_SH3-like_sf"/>
</dbReference>
<dbReference type="NCBIfam" id="TIGR00922">
    <property type="entry name" value="nusG"/>
    <property type="match status" value="1"/>
</dbReference>
<dbReference type="PANTHER" id="PTHR30265">
    <property type="entry name" value="RHO-INTERACTING TRANSCRIPTION TERMINATION FACTOR NUSG"/>
    <property type="match status" value="1"/>
</dbReference>
<dbReference type="PANTHER" id="PTHR30265:SF2">
    <property type="entry name" value="TRANSCRIPTION TERMINATION_ANTITERMINATION PROTEIN NUSG"/>
    <property type="match status" value="1"/>
</dbReference>
<dbReference type="Pfam" id="PF00467">
    <property type="entry name" value="KOW"/>
    <property type="match status" value="1"/>
</dbReference>
<dbReference type="Pfam" id="PF02357">
    <property type="entry name" value="NusG"/>
    <property type="match status" value="1"/>
</dbReference>
<dbReference type="PRINTS" id="PR00338">
    <property type="entry name" value="NUSGTNSCPFCT"/>
</dbReference>
<dbReference type="SMART" id="SM00739">
    <property type="entry name" value="KOW"/>
    <property type="match status" value="1"/>
</dbReference>
<dbReference type="SMART" id="SM00738">
    <property type="entry name" value="NGN"/>
    <property type="match status" value="1"/>
</dbReference>
<dbReference type="SUPFAM" id="SSF82679">
    <property type="entry name" value="N-utilization substance G protein NusG, N-terminal domain"/>
    <property type="match status" value="1"/>
</dbReference>
<dbReference type="SUPFAM" id="SSF50104">
    <property type="entry name" value="Translation proteins SH3-like domain"/>
    <property type="match status" value="1"/>
</dbReference>
<dbReference type="PROSITE" id="PS01014">
    <property type="entry name" value="NUSG"/>
    <property type="match status" value="1"/>
</dbReference>
<accession>Q4UKC9</accession>
<keyword id="KW-0804">Transcription</keyword>
<keyword id="KW-0889">Transcription antitermination</keyword>
<keyword id="KW-0805">Transcription regulation</keyword>
<keyword id="KW-0806">Transcription termination</keyword>
<comment type="function">
    <text evidence="1">Participates in transcription elongation, termination and antitermination.</text>
</comment>
<comment type="similarity">
    <text evidence="1">Belongs to the NusG family.</text>
</comment>
<name>NUSG_RICFE</name>
<proteinExistence type="inferred from homology"/>
<feature type="chain" id="PRO_0000288747" description="Transcription termination/antitermination protein NusG">
    <location>
        <begin position="1"/>
        <end position="192"/>
    </location>
</feature>
<feature type="domain" description="KOW" evidence="1">
    <location>
        <begin position="140"/>
        <end position="168"/>
    </location>
</feature>